<sequence length="64" mass="7534">MPKIKTHRGAAKRFKKTGTGKFRTKHAFLSHILEKKSAKRKRRLRKKFVLSAGDVRRIRAMIPY</sequence>
<organism>
    <name type="scientific">Desulforudis audaxviator (strain MP104C)</name>
    <dbReference type="NCBI Taxonomy" id="477974"/>
    <lineage>
        <taxon>Bacteria</taxon>
        <taxon>Bacillati</taxon>
        <taxon>Bacillota</taxon>
        <taxon>Clostridia</taxon>
        <taxon>Thermoanaerobacterales</taxon>
        <taxon>Candidatus Desulforudaceae</taxon>
        <taxon>Candidatus Desulforudis</taxon>
    </lineage>
</organism>
<protein>
    <recommendedName>
        <fullName evidence="1">Large ribosomal subunit protein bL35</fullName>
    </recommendedName>
    <alternativeName>
        <fullName evidence="2">50S ribosomal protein L35</fullName>
    </alternativeName>
</protein>
<name>RL35_DESAP</name>
<gene>
    <name evidence="1" type="primary">rpmI</name>
    <name type="ordered locus">Daud_1382</name>
</gene>
<reference key="1">
    <citation type="submission" date="2007-10" db="EMBL/GenBank/DDBJ databases">
        <title>Complete sequence of chromosome of Desulforudis audaxviator MP104C.</title>
        <authorList>
            <person name="Copeland A."/>
            <person name="Lucas S."/>
            <person name="Lapidus A."/>
            <person name="Barry K."/>
            <person name="Glavina del Rio T."/>
            <person name="Dalin E."/>
            <person name="Tice H."/>
            <person name="Bruce D."/>
            <person name="Pitluck S."/>
            <person name="Lowry S.R."/>
            <person name="Larimer F."/>
            <person name="Land M.L."/>
            <person name="Hauser L."/>
            <person name="Kyrpides N."/>
            <person name="Ivanova N.N."/>
            <person name="Richardson P."/>
        </authorList>
    </citation>
    <scope>NUCLEOTIDE SEQUENCE [LARGE SCALE GENOMIC DNA]</scope>
    <source>
        <strain>MP104C</strain>
    </source>
</reference>
<comment type="similarity">
    <text evidence="1">Belongs to the bacterial ribosomal protein bL35 family.</text>
</comment>
<dbReference type="EMBL" id="CP000860">
    <property type="protein sequence ID" value="ACA59891.1"/>
    <property type="molecule type" value="Genomic_DNA"/>
</dbReference>
<dbReference type="RefSeq" id="WP_012302476.1">
    <property type="nucleotide sequence ID" value="NC_010424.1"/>
</dbReference>
<dbReference type="SMR" id="B1I4I9"/>
<dbReference type="STRING" id="477974.Daud_1382"/>
<dbReference type="KEGG" id="dau:Daud_1382"/>
<dbReference type="eggNOG" id="COG0291">
    <property type="taxonomic scope" value="Bacteria"/>
</dbReference>
<dbReference type="HOGENOM" id="CLU_169643_4_3_9"/>
<dbReference type="Proteomes" id="UP000008544">
    <property type="component" value="Chromosome"/>
</dbReference>
<dbReference type="GO" id="GO:0022625">
    <property type="term" value="C:cytosolic large ribosomal subunit"/>
    <property type="evidence" value="ECO:0007669"/>
    <property type="project" value="TreeGrafter"/>
</dbReference>
<dbReference type="GO" id="GO:0003735">
    <property type="term" value="F:structural constituent of ribosome"/>
    <property type="evidence" value="ECO:0007669"/>
    <property type="project" value="InterPro"/>
</dbReference>
<dbReference type="GO" id="GO:0006412">
    <property type="term" value="P:translation"/>
    <property type="evidence" value="ECO:0007669"/>
    <property type="project" value="UniProtKB-UniRule"/>
</dbReference>
<dbReference type="FunFam" id="4.10.410.60:FF:000001">
    <property type="entry name" value="50S ribosomal protein L35"/>
    <property type="match status" value="1"/>
</dbReference>
<dbReference type="Gene3D" id="4.10.410.60">
    <property type="match status" value="1"/>
</dbReference>
<dbReference type="HAMAP" id="MF_00514">
    <property type="entry name" value="Ribosomal_bL35"/>
    <property type="match status" value="1"/>
</dbReference>
<dbReference type="InterPro" id="IPR001706">
    <property type="entry name" value="Ribosomal_bL35"/>
</dbReference>
<dbReference type="InterPro" id="IPR021137">
    <property type="entry name" value="Ribosomal_bL35-like"/>
</dbReference>
<dbReference type="InterPro" id="IPR018265">
    <property type="entry name" value="Ribosomal_bL35_CS"/>
</dbReference>
<dbReference type="InterPro" id="IPR037229">
    <property type="entry name" value="Ribosomal_bL35_sf"/>
</dbReference>
<dbReference type="NCBIfam" id="TIGR00001">
    <property type="entry name" value="rpmI_bact"/>
    <property type="match status" value="1"/>
</dbReference>
<dbReference type="PANTHER" id="PTHR33343">
    <property type="entry name" value="54S RIBOSOMAL PROTEIN BL35M"/>
    <property type="match status" value="1"/>
</dbReference>
<dbReference type="PANTHER" id="PTHR33343:SF1">
    <property type="entry name" value="LARGE RIBOSOMAL SUBUNIT PROTEIN BL35M"/>
    <property type="match status" value="1"/>
</dbReference>
<dbReference type="Pfam" id="PF01632">
    <property type="entry name" value="Ribosomal_L35p"/>
    <property type="match status" value="1"/>
</dbReference>
<dbReference type="PRINTS" id="PR00064">
    <property type="entry name" value="RIBOSOMALL35"/>
</dbReference>
<dbReference type="SUPFAM" id="SSF143034">
    <property type="entry name" value="L35p-like"/>
    <property type="match status" value="1"/>
</dbReference>
<dbReference type="PROSITE" id="PS00936">
    <property type="entry name" value="RIBOSOMAL_L35"/>
    <property type="match status" value="1"/>
</dbReference>
<evidence type="ECO:0000255" key="1">
    <source>
        <dbReference type="HAMAP-Rule" id="MF_00514"/>
    </source>
</evidence>
<evidence type="ECO:0000305" key="2"/>
<feature type="chain" id="PRO_1000127338" description="Large ribosomal subunit protein bL35">
    <location>
        <begin position="1"/>
        <end position="64"/>
    </location>
</feature>
<keyword id="KW-1185">Reference proteome</keyword>
<keyword id="KW-0687">Ribonucleoprotein</keyword>
<keyword id="KW-0689">Ribosomal protein</keyword>
<accession>B1I4I9</accession>
<proteinExistence type="inferred from homology"/>